<keyword id="KW-0002">3D-structure</keyword>
<keyword id="KW-0903">Direct protein sequencing</keyword>
<keyword id="KW-1035">Host cytoplasm</keyword>
<keyword id="KW-1185">Reference proteome</keyword>
<keyword id="KW-0118">Viral capsid assembly</keyword>
<keyword id="KW-1188">Viral release from host cell</keyword>
<dbReference type="EMBL" id="J02482">
    <property type="protein sequence ID" value="AAA32575.1"/>
    <property type="molecule type" value="Genomic_DNA"/>
</dbReference>
<dbReference type="EMBL" id="X07809">
    <property type="protein sequence ID" value="CAA30667.1"/>
    <property type="molecule type" value="Genomic_DNA"/>
</dbReference>
<dbReference type="PIR" id="A04245">
    <property type="entry name" value="ZDBPF4"/>
</dbReference>
<dbReference type="PDB" id="1AL0">
    <property type="method" value="X-ray"/>
    <property type="resolution" value="3.50 A"/>
    <property type="chains" value="1/2/3/4=1-152"/>
</dbReference>
<dbReference type="PDB" id="1CD3">
    <property type="method" value="X-ray"/>
    <property type="resolution" value="3.50 A"/>
    <property type="chains" value="1/2/3/4=1-152"/>
</dbReference>
<dbReference type="PDB" id="1M0F">
    <property type="method" value="EM"/>
    <property type="resolution" value="16.00 A"/>
    <property type="chains" value="1/2/3/4=1-152"/>
</dbReference>
<dbReference type="PDB" id="1TX9">
    <property type="method" value="X-ray"/>
    <property type="resolution" value="3.31 A"/>
    <property type="chains" value="A/B=2-152"/>
</dbReference>
<dbReference type="PDBsum" id="1AL0"/>
<dbReference type="PDBsum" id="1CD3"/>
<dbReference type="PDBsum" id="1M0F"/>
<dbReference type="PDBsum" id="1TX9"/>
<dbReference type="SMR" id="P69486"/>
<dbReference type="KEGG" id="vg:2546399"/>
<dbReference type="EvolutionaryTrace" id="P69486"/>
<dbReference type="Proteomes" id="UP000005893">
    <property type="component" value="Segment"/>
</dbReference>
<dbReference type="GO" id="GO:0030430">
    <property type="term" value="C:host cell cytoplasm"/>
    <property type="evidence" value="ECO:0007669"/>
    <property type="project" value="UniProtKB-SubCell"/>
</dbReference>
<dbReference type="GO" id="GO:0046797">
    <property type="term" value="P:viral procapsid maturation"/>
    <property type="evidence" value="ECO:0007669"/>
    <property type="project" value="InterPro"/>
</dbReference>
<dbReference type="Gene3D" id="1.10.1850.10">
    <property type="entry name" value="Scaffold protein D"/>
    <property type="match status" value="1"/>
</dbReference>
<dbReference type="InterPro" id="IPR004196">
    <property type="entry name" value="Scaffold_D"/>
</dbReference>
<dbReference type="InterPro" id="IPR036632">
    <property type="entry name" value="Scaffold_D_sf"/>
</dbReference>
<dbReference type="Pfam" id="PF02925">
    <property type="entry name" value="gpD"/>
    <property type="match status" value="1"/>
</dbReference>
<dbReference type="SUPFAM" id="SSF48045">
    <property type="entry name" value="Scaffolding protein gpD of bacteriophage procapsid"/>
    <property type="match status" value="1"/>
</dbReference>
<reference key="1">
    <citation type="journal article" date="1977" name="Nature">
        <title>Nucleotide sequence of bacteriophage phi X174 DNA.</title>
        <authorList>
            <person name="Sanger F."/>
            <person name="Air G.M."/>
            <person name="Barrell B.G."/>
            <person name="Brown N.L."/>
            <person name="Coulson A.R."/>
            <person name="Fiddes J.C."/>
            <person name="Hutchison C.A. III"/>
            <person name="Slocombe P.M."/>
            <person name="Smith M."/>
        </authorList>
    </citation>
    <scope>NUCLEOTIDE SEQUENCE [GENOMIC DNA]</scope>
</reference>
<reference key="2">
    <citation type="journal article" date="1976" name="Nature">
        <title>Overlapping genes in bacteriophage phiX174.</title>
        <authorList>
            <person name="Barrell B.G."/>
            <person name="Air G.M."/>
            <person name="Hutchison C.A. III"/>
        </authorList>
    </citation>
    <scope>NUCLEOTIDE SEQUENCE [GENOMIC DNA]</scope>
    <scope>PROTEIN SEQUENCE OF 2-11; 13-20; 25-58; 61-93; 95-123 AND 125-152</scope>
</reference>
<reference key="3">
    <citation type="journal article" date="1987" name="J. Mol. Biol.">
        <title>Role of premature translational termination in the regulation of expression of the phi X174 lysis gene.</title>
        <authorList>
            <person name="Buckley K.J."/>
            <person name="Hayashi M."/>
        </authorList>
    </citation>
    <scope>NUCLEOTIDE SEQUENCE [GENOMIC DNA] OF 1-68</scope>
</reference>
<reference key="4">
    <citation type="journal article" date="1976" name="J. Virol.">
        <title>Purification and properties of bacteriophage phi X 174 gene D product.</title>
        <authorList>
            <person name="Farber M.B."/>
        </authorList>
    </citation>
    <scope>PROTEIN SEQUENCE OF 2-9</scope>
    <scope>IDENTIFICATION</scope>
</reference>
<reference key="5">
    <citation type="journal article" date="1979" name="Proc. Natl. Acad. Sci. U.S.A.">
        <title>Isolation and identification of bacteriophage phi X174 prohead.</title>
        <authorList>
            <person name="Mukai R."/>
            <person name="Hamatake R.K."/>
            <person name="Hayashi M."/>
        </authorList>
    </citation>
    <scope>FUNCTION</scope>
    <scope>PROCAPSID STRUCTURE</scope>
</reference>
<reference key="6">
    <citation type="journal article" date="2003" name="Virology">
        <title>Genetic analyses of putative conformation switching and cross-species inhibitory domains in Microviridae external scaffolding proteins.</title>
        <authorList>
            <person name="Burch A.D."/>
            <person name="Fane B.A."/>
        </authorList>
    </citation>
    <scope>MUTAGENESIS OF GLY-61</scope>
</reference>
<reference key="7">
    <citation type="journal article" date="2005" name="J. Virol.">
        <title>Identification of an interacting coat-external scaffolding protein domain required for both the initiation of phiX174 procapsid morphogenesis and the completion of DNA packaging.</title>
        <authorList>
            <person name="Uchiyama A."/>
            <person name="Fane B.A."/>
        </authorList>
    </citation>
    <scope>FUNCTION</scope>
</reference>
<reference key="8">
    <citation type="journal article" date="1997" name="Nature">
        <title>Structure of a viral procapsid with molecular scaffolding.</title>
        <authorList>
            <person name="Dokland T."/>
            <person name="McKenna R."/>
            <person name="Ilag L.L."/>
            <person name="Bowman B.R."/>
            <person name="Incardona N.L."/>
            <person name="Fane B.A."/>
            <person name="Rossmann M.G."/>
        </authorList>
    </citation>
    <scope>X-RAY CRYSTALLOGRAPHY (3.5 ANGSTROMS)</scope>
    <scope>SUBUNIT</scope>
</reference>
<comment type="function">
    <text evidence="4 5">Assembles the procapsid by joining twelve 12S pre-assembly complex into a T=1 icosahedral particle, called 108S procapsid. Ten proteins D bind each 12S complex, which are formed by three pentamers of F, G, B protein and a H protein. The scaffolding protein is released from the provirion after genome packaging to form the mature virion.</text>
</comment>
<comment type="subunit">
    <text evidence="6">Component of the procapsid particle composed of 60 copies of the internally located B, 240 copies of the external scaffolding protein D, 60 copies of each of the viral structural proteins F and G, and 12 copies of protein H.</text>
</comment>
<comment type="subcellular location">
    <subcellularLocation>
        <location>Host cytoplasm</location>
    </subcellularLocation>
</comment>
<comment type="similarity">
    <text evidence="7">Belongs to the microvirus D protein family.</text>
</comment>
<protein>
    <recommendedName>
        <fullName>External scaffolding protein D</fullName>
    </recommendedName>
    <alternativeName>
        <fullName>Scaffolding protein D</fullName>
        <shortName>GPD</shortName>
    </alternativeName>
</protein>
<evidence type="ECO:0000269" key="1">
    <source>
    </source>
</evidence>
<evidence type="ECO:0000269" key="2">
    <source>
    </source>
</evidence>
<evidence type="ECO:0000269" key="3">
    <source>
    </source>
</evidence>
<evidence type="ECO:0000269" key="4">
    <source>
    </source>
</evidence>
<evidence type="ECO:0000269" key="5">
    <source>
    </source>
</evidence>
<evidence type="ECO:0000269" key="6">
    <source>
    </source>
</evidence>
<evidence type="ECO:0000305" key="7"/>
<evidence type="ECO:0007829" key="8">
    <source>
        <dbReference type="PDB" id="1AL0"/>
    </source>
</evidence>
<evidence type="ECO:0007829" key="9">
    <source>
        <dbReference type="PDB" id="1CD3"/>
    </source>
</evidence>
<evidence type="ECO:0007829" key="10">
    <source>
        <dbReference type="PDB" id="1TX9"/>
    </source>
</evidence>
<proteinExistence type="evidence at protein level"/>
<organismHost>
    <name type="scientific">Escherichia coli C</name>
    <dbReference type="NCBI Taxonomy" id="498388"/>
</organismHost>
<accession>P69486</accession>
<accession>P03637</accession>
<organism>
    <name type="scientific">Enterobacteria phage phiX174</name>
    <name type="common">Isolate Sanger</name>
    <name type="synonym">Bacteriophage phi-X174</name>
    <dbReference type="NCBI Taxonomy" id="1217068"/>
    <lineage>
        <taxon>Viruses</taxon>
        <taxon>Monodnaviria</taxon>
        <taxon>Sangervirae</taxon>
        <taxon>Phixviricota</taxon>
        <taxon>Malgrandaviricetes</taxon>
        <taxon>Petitvirales</taxon>
        <taxon>Microviridae</taxon>
        <taxon>Bullavirinae</taxon>
        <taxon>Sinsheimervirus</taxon>
        <taxon>Escherichia phage phiX174</taxon>
    </lineage>
</organism>
<gene>
    <name type="primary">D</name>
</gene>
<name>SCAFD_BPPHS</name>
<feature type="initiator methionine" description="Removed; by host" evidence="1 2">
    <location>
        <position position="1"/>
    </location>
</feature>
<feature type="chain" id="PRO_0000164880" description="External scaffolding protein D">
    <location>
        <begin position="2"/>
        <end position="152"/>
    </location>
</feature>
<feature type="mutagenesis site" description="Confers a lethal phenotype." evidence="3">
    <original>G</original>
    <variation>D</variation>
    <location>
        <position position="61"/>
    </location>
</feature>
<feature type="mutagenesis site" description="Confers a lethal phenotype." evidence="3">
    <original>G</original>
    <variation>E</variation>
    <location>
        <position position="61"/>
    </location>
</feature>
<feature type="mutagenesis site" description="Confers a lethal phenotype." evidence="3">
    <original>G</original>
    <variation>V</variation>
    <location>
        <position position="61"/>
    </location>
</feature>
<feature type="helix" evidence="10">
    <location>
        <begin position="5"/>
        <end position="23"/>
    </location>
</feature>
<feature type="helix" evidence="10">
    <location>
        <begin position="31"/>
        <end position="38"/>
    </location>
</feature>
<feature type="strand" evidence="9">
    <location>
        <begin position="39"/>
        <end position="41"/>
    </location>
</feature>
<feature type="helix" evidence="8">
    <location>
        <begin position="45"/>
        <end position="47"/>
    </location>
</feature>
<feature type="helix" evidence="10">
    <location>
        <begin position="48"/>
        <end position="59"/>
    </location>
</feature>
<feature type="helix" evidence="10">
    <location>
        <begin position="61"/>
        <end position="65"/>
    </location>
</feature>
<feature type="helix" evidence="10">
    <location>
        <begin position="75"/>
        <end position="85"/>
    </location>
</feature>
<feature type="helix" evidence="10">
    <location>
        <begin position="88"/>
        <end position="97"/>
    </location>
</feature>
<feature type="turn" evidence="10">
    <location>
        <begin position="98"/>
        <end position="100"/>
    </location>
</feature>
<feature type="helix" evidence="10">
    <location>
        <begin position="104"/>
        <end position="109"/>
    </location>
</feature>
<feature type="helix" evidence="10">
    <location>
        <begin position="117"/>
        <end position="129"/>
    </location>
</feature>
<feature type="helix" evidence="8">
    <location>
        <begin position="140"/>
        <end position="143"/>
    </location>
</feature>
<sequence>MSQVTEQSVRFQTALASIKLIQASAVLDLTEDDFDFLTSNKVWIATDRSRARRCVEACVYGTLDFVGYPRFPAPVEFIAAVIAYYVHPVNIQTACLIMEGAEFTENIINGVERPVKAAELFAFTLRVRAGNTDVLTDAEENVRQKLRAEGVM</sequence>